<reference key="1">
    <citation type="journal article" date="1987" name="FEBS Lett.">
        <title>Nucleotide sequence of the alpha-amylase gene (ALP1) in the yeast Saccharomycopsis fibuligera.</title>
        <authorList>
            <person name="Itoh T."/>
            <person name="Yamashita I."/>
            <person name="Fukui S."/>
        </authorList>
    </citation>
    <scope>NUCLEOTIDE SEQUENCE [GENOMIC DNA]</scope>
</reference>
<keyword id="KW-0106">Calcium</keyword>
<keyword id="KW-0119">Carbohydrate metabolism</keyword>
<keyword id="KW-1015">Disulfide bond</keyword>
<keyword id="KW-0325">Glycoprotein</keyword>
<keyword id="KW-0326">Glycosidase</keyword>
<keyword id="KW-0378">Hydrolase</keyword>
<keyword id="KW-0479">Metal-binding</keyword>
<keyword id="KW-0964">Secreted</keyword>
<keyword id="KW-0732">Signal</keyword>
<comment type="catalytic activity">
    <reaction>
        <text>Endohydrolysis of (1-&gt;4)-alpha-D-glucosidic linkages in polysaccharides containing three or more (1-&gt;4)-alpha-linked D-glucose units.</text>
        <dbReference type="EC" id="3.2.1.1"/>
    </reaction>
</comment>
<comment type="cofactor">
    <cofactor evidence="1">
        <name>Ca(2+)</name>
        <dbReference type="ChEBI" id="CHEBI:29108"/>
    </cofactor>
    <text evidence="1">Binds 2 calcium ions per subunit. Calcium is inhibitory at high concentrations.</text>
</comment>
<comment type="subcellular location">
    <subcellularLocation>
        <location evidence="4">Secreted</location>
    </subcellularLocation>
</comment>
<comment type="similarity">
    <text evidence="4">Belongs to the glycosyl hydrolase 13 family.</text>
</comment>
<organism>
    <name type="scientific">Saccharomycopsis fibuligera</name>
    <name type="common">Yeast</name>
    <dbReference type="NCBI Taxonomy" id="4944"/>
    <lineage>
        <taxon>Eukaryota</taxon>
        <taxon>Fungi</taxon>
        <taxon>Dikarya</taxon>
        <taxon>Ascomycota</taxon>
        <taxon>Saccharomycotina</taxon>
        <taxon>Saccharomycetes</taxon>
        <taxon>Saccharomycopsidaceae</taxon>
        <taxon>Saccharomycopsis</taxon>
    </lineage>
</organism>
<dbReference type="EC" id="3.2.1.1"/>
<dbReference type="EMBL" id="X05791">
    <property type="protein sequence ID" value="CAA29233.1"/>
    <property type="molecule type" value="Genomic_DNA"/>
</dbReference>
<dbReference type="PIR" id="S00064">
    <property type="entry name" value="ALBYAF"/>
</dbReference>
<dbReference type="SMR" id="P21567"/>
<dbReference type="ChEMBL" id="CHEMBL5596"/>
<dbReference type="CAZy" id="GH13">
    <property type="family name" value="Glycoside Hydrolase Family 13"/>
</dbReference>
<dbReference type="GlyCosmos" id="P21567">
    <property type="glycosylation" value="1 site, No reported glycans"/>
</dbReference>
<dbReference type="GO" id="GO:0005576">
    <property type="term" value="C:extracellular region"/>
    <property type="evidence" value="ECO:0007669"/>
    <property type="project" value="UniProtKB-SubCell"/>
</dbReference>
<dbReference type="GO" id="GO:0004556">
    <property type="term" value="F:alpha-amylase activity"/>
    <property type="evidence" value="ECO:0007669"/>
    <property type="project" value="UniProtKB-EC"/>
</dbReference>
<dbReference type="GO" id="GO:0005509">
    <property type="term" value="F:calcium ion binding"/>
    <property type="evidence" value="ECO:0007669"/>
    <property type="project" value="InterPro"/>
</dbReference>
<dbReference type="GO" id="GO:0016052">
    <property type="term" value="P:carbohydrate catabolic process"/>
    <property type="evidence" value="ECO:0007669"/>
    <property type="project" value="InterPro"/>
</dbReference>
<dbReference type="CDD" id="cd11319">
    <property type="entry name" value="AmyAc_euk_AmyA"/>
    <property type="match status" value="1"/>
</dbReference>
<dbReference type="FunFam" id="3.20.20.80:FF:000120">
    <property type="entry name" value="Alpha-amylase A"/>
    <property type="match status" value="1"/>
</dbReference>
<dbReference type="Gene3D" id="3.20.20.80">
    <property type="entry name" value="Glycosidases"/>
    <property type="match status" value="1"/>
</dbReference>
<dbReference type="Gene3D" id="2.60.40.1180">
    <property type="entry name" value="Golgi alpha-mannosidase II"/>
    <property type="match status" value="1"/>
</dbReference>
<dbReference type="InterPro" id="IPR013777">
    <property type="entry name" value="A-amylase-like"/>
</dbReference>
<dbReference type="InterPro" id="IPR015340">
    <property type="entry name" value="A_amylase_C_dom"/>
</dbReference>
<dbReference type="InterPro" id="IPR006046">
    <property type="entry name" value="Alpha_amylase"/>
</dbReference>
<dbReference type="InterPro" id="IPR006047">
    <property type="entry name" value="Glyco_hydro_13_cat_dom"/>
</dbReference>
<dbReference type="InterPro" id="IPR013780">
    <property type="entry name" value="Glyco_hydro_b"/>
</dbReference>
<dbReference type="InterPro" id="IPR017853">
    <property type="entry name" value="Glycoside_hydrolase_SF"/>
</dbReference>
<dbReference type="PANTHER" id="PTHR10357:SF215">
    <property type="entry name" value="ALPHA-AMYLASE 1"/>
    <property type="match status" value="1"/>
</dbReference>
<dbReference type="PANTHER" id="PTHR10357">
    <property type="entry name" value="ALPHA-AMYLASE FAMILY MEMBER"/>
    <property type="match status" value="1"/>
</dbReference>
<dbReference type="Pfam" id="PF09260">
    <property type="entry name" value="A_amylase_dom_C"/>
    <property type="match status" value="1"/>
</dbReference>
<dbReference type="Pfam" id="PF00128">
    <property type="entry name" value="Alpha-amylase"/>
    <property type="match status" value="1"/>
</dbReference>
<dbReference type="PIRSF" id="PIRSF001024">
    <property type="entry name" value="Alph-amyl_fung"/>
    <property type="match status" value="1"/>
</dbReference>
<dbReference type="PRINTS" id="PR00110">
    <property type="entry name" value="ALPHAAMYLASE"/>
</dbReference>
<dbReference type="SMART" id="SM00642">
    <property type="entry name" value="Aamy"/>
    <property type="match status" value="1"/>
</dbReference>
<dbReference type="SUPFAM" id="SSF51445">
    <property type="entry name" value="(Trans)glycosidases"/>
    <property type="match status" value="1"/>
</dbReference>
<dbReference type="SUPFAM" id="SSF51011">
    <property type="entry name" value="Glycosyl hydrolase domain"/>
    <property type="match status" value="1"/>
</dbReference>
<name>AMY1_SACFI</name>
<protein>
    <recommendedName>
        <fullName>Alpha-amylase</fullName>
        <ecNumber>3.2.1.1</ecNumber>
    </recommendedName>
</protein>
<accession>P21567</accession>
<evidence type="ECO:0000250" key="1">
    <source>
        <dbReference type="UniProtKB" id="P0C1B3"/>
    </source>
</evidence>
<evidence type="ECO:0000250" key="2">
    <source>
        <dbReference type="UniProtKB" id="P56271"/>
    </source>
</evidence>
<evidence type="ECO:0000255" key="3"/>
<evidence type="ECO:0000305" key="4"/>
<feature type="signal peptide" evidence="3">
    <location>
        <begin position="1"/>
        <end position="26"/>
    </location>
</feature>
<feature type="chain" id="PRO_0000001351" description="Alpha-amylase">
    <location>
        <begin position="27"/>
        <end position="494"/>
    </location>
</feature>
<feature type="active site" description="Nucleophile" evidence="2">
    <location>
        <position position="233"/>
    </location>
</feature>
<feature type="active site" description="Proton donor" evidence="2">
    <location>
        <position position="257"/>
    </location>
</feature>
<feature type="binding site" evidence="1">
    <location>
        <position position="110"/>
    </location>
    <ligand>
        <name>substrate</name>
    </ligand>
</feature>
<feature type="binding site" evidence="1">
    <location>
        <position position="148"/>
    </location>
    <ligand>
        <name>Ca(2+)</name>
        <dbReference type="ChEBI" id="CHEBI:29108"/>
        <label>1</label>
    </ligand>
</feature>
<feature type="binding site" evidence="1">
    <location>
        <position position="149"/>
    </location>
    <ligand>
        <name>substrate</name>
    </ligand>
</feature>
<feature type="binding site" evidence="2">
    <location>
        <position position="202"/>
    </location>
    <ligand>
        <name>Ca(2+)</name>
        <dbReference type="ChEBI" id="CHEBI:29108"/>
        <label>1</label>
    </ligand>
</feature>
<feature type="binding site" evidence="1">
    <location>
        <position position="231"/>
    </location>
    <ligand>
        <name>substrate</name>
    </ligand>
</feature>
<feature type="binding site" evidence="1">
    <location>
        <position position="233"/>
    </location>
    <ligand>
        <name>Ca(2+)</name>
        <dbReference type="ChEBI" id="CHEBI:29108"/>
        <label>2</label>
    </ligand>
</feature>
<feature type="binding site" evidence="1">
    <location>
        <begin position="236"/>
        <end position="237"/>
    </location>
    <ligand>
        <name>substrate</name>
    </ligand>
</feature>
<feature type="binding site" evidence="1">
    <location>
        <position position="237"/>
    </location>
    <ligand>
        <name>Ca(2+)</name>
        <dbReference type="ChEBI" id="CHEBI:29108"/>
        <label>1</label>
    </ligand>
</feature>
<feature type="binding site" evidence="1">
    <location>
        <position position="257"/>
    </location>
    <ligand>
        <name>Ca(2+)</name>
        <dbReference type="ChEBI" id="CHEBI:29108"/>
        <label>2</label>
    </ligand>
</feature>
<feature type="binding site" evidence="1">
    <location>
        <position position="261"/>
    </location>
    <ligand>
        <name>substrate</name>
    </ligand>
</feature>
<feature type="binding site" evidence="1">
    <location>
        <position position="324"/>
    </location>
    <ligand>
        <name>substrate</name>
    </ligand>
</feature>
<feature type="binding site" evidence="1">
    <location>
        <position position="371"/>
    </location>
    <ligand>
        <name>substrate</name>
    </ligand>
</feature>
<feature type="site" description="Transition state stabilizer" evidence="1">
    <location>
        <position position="324"/>
    </location>
</feature>
<feature type="glycosylation site" description="N-linked (GlcNAc...) asparagine" evidence="4">
    <location>
        <position position="224"/>
    </location>
</feature>
<feature type="disulfide bond" evidence="2">
    <location>
        <begin position="57"/>
        <end position="65"/>
    </location>
</feature>
<feature type="disulfide bond" evidence="2">
    <location>
        <begin position="177"/>
        <end position="191"/>
    </location>
</feature>
<feature type="disulfide bond" evidence="2">
    <location>
        <begin position="267"/>
        <end position="310"/>
    </location>
</feature>
<feature type="disulfide bond" evidence="2">
    <location>
        <begin position="462"/>
        <end position="493"/>
    </location>
</feature>
<gene>
    <name type="primary">ALP1</name>
</gene>
<proteinExistence type="inferred from homology"/>
<sequence length="494" mass="54387">MQISKAALLASLAALVYAQPVTLFKRETNADKWRSQSIYQIVTDRFARTDGDTSASCNTEDRLYCGGSFQGIIKKLDYIKDMGFTAIWISPVVENIPDNTAYGYAYHGYWMKNIYKINENFGTADDLKSLAQELHDRDMLLMVDIVTNHYGSDGSGDSIDYSEYTPFNDQKYFHNYCLISNYDDQAQVQSCWEGDSSVALPDLRTEDSDVASVFNSWVKDFVGNYSIDGLRIDSAKHVDQGFFPDFVSASGVYSVGEVFQGDPAYTCPYQNYIPGVSNYPLYYPTTRFFKTTDSSSSELTQMISSVASSCSDPTLLTNFVENHDNERFASMTSDQSLISNAIAFVLLGDGIPVIYYGQEQGLSGKSDPNNREALWLSGYNKESDYYKLIAKANAARNAAVYQDSSYATSQLSVIFSNDHVIATKRGSVVSVFNNLGSSGSSDVTISNTGYSSGEDLVEVLTCSTVSGSSDLQVSIQGGQPQIFVPAKYASDICS</sequence>